<dbReference type="EC" id="2.7.7.6" evidence="1"/>
<dbReference type="EMBL" id="AM920689">
    <property type="protein sequence ID" value="CAP52830.1"/>
    <property type="molecule type" value="Genomic_DNA"/>
</dbReference>
<dbReference type="SMR" id="B0RU88"/>
<dbReference type="KEGG" id="xca:xcc-b100_3465"/>
<dbReference type="HOGENOM" id="CLU_000524_3_1_6"/>
<dbReference type="Proteomes" id="UP000001188">
    <property type="component" value="Chromosome"/>
</dbReference>
<dbReference type="GO" id="GO:0000428">
    <property type="term" value="C:DNA-directed RNA polymerase complex"/>
    <property type="evidence" value="ECO:0007669"/>
    <property type="project" value="UniProtKB-KW"/>
</dbReference>
<dbReference type="GO" id="GO:0003677">
    <property type="term" value="F:DNA binding"/>
    <property type="evidence" value="ECO:0007669"/>
    <property type="project" value="UniProtKB-UniRule"/>
</dbReference>
<dbReference type="GO" id="GO:0003899">
    <property type="term" value="F:DNA-directed RNA polymerase activity"/>
    <property type="evidence" value="ECO:0007669"/>
    <property type="project" value="UniProtKB-UniRule"/>
</dbReference>
<dbReference type="GO" id="GO:0000287">
    <property type="term" value="F:magnesium ion binding"/>
    <property type="evidence" value="ECO:0007669"/>
    <property type="project" value="UniProtKB-UniRule"/>
</dbReference>
<dbReference type="GO" id="GO:0008270">
    <property type="term" value="F:zinc ion binding"/>
    <property type="evidence" value="ECO:0007669"/>
    <property type="project" value="UniProtKB-UniRule"/>
</dbReference>
<dbReference type="GO" id="GO:0006351">
    <property type="term" value="P:DNA-templated transcription"/>
    <property type="evidence" value="ECO:0007669"/>
    <property type="project" value="UniProtKB-UniRule"/>
</dbReference>
<dbReference type="CDD" id="cd02655">
    <property type="entry name" value="RNAP_beta'_C"/>
    <property type="match status" value="1"/>
</dbReference>
<dbReference type="CDD" id="cd01609">
    <property type="entry name" value="RNAP_beta'_N"/>
    <property type="match status" value="1"/>
</dbReference>
<dbReference type="FunFam" id="1.10.132.30:FF:000003">
    <property type="entry name" value="DNA-directed RNA polymerase subunit beta"/>
    <property type="match status" value="1"/>
</dbReference>
<dbReference type="FunFam" id="1.10.150.390:FF:000002">
    <property type="entry name" value="DNA-directed RNA polymerase subunit beta"/>
    <property type="match status" value="1"/>
</dbReference>
<dbReference type="Gene3D" id="1.10.132.30">
    <property type="match status" value="1"/>
</dbReference>
<dbReference type="Gene3D" id="1.10.150.390">
    <property type="match status" value="1"/>
</dbReference>
<dbReference type="Gene3D" id="1.10.1790.20">
    <property type="match status" value="1"/>
</dbReference>
<dbReference type="Gene3D" id="1.10.40.90">
    <property type="match status" value="1"/>
</dbReference>
<dbReference type="Gene3D" id="2.40.40.20">
    <property type="match status" value="1"/>
</dbReference>
<dbReference type="Gene3D" id="2.40.50.100">
    <property type="match status" value="3"/>
</dbReference>
<dbReference type="Gene3D" id="4.10.860.120">
    <property type="entry name" value="RNA polymerase II, clamp domain"/>
    <property type="match status" value="1"/>
</dbReference>
<dbReference type="Gene3D" id="1.10.274.100">
    <property type="entry name" value="RNA polymerase Rpb1, domain 3"/>
    <property type="match status" value="2"/>
</dbReference>
<dbReference type="HAMAP" id="MF_01322">
    <property type="entry name" value="RNApol_bact_RpoC"/>
    <property type="match status" value="1"/>
</dbReference>
<dbReference type="InterPro" id="IPR045867">
    <property type="entry name" value="DNA-dir_RpoC_beta_prime"/>
</dbReference>
<dbReference type="InterPro" id="IPR012754">
    <property type="entry name" value="DNA-dir_RpoC_beta_prime_bact"/>
</dbReference>
<dbReference type="InterPro" id="IPR000722">
    <property type="entry name" value="RNA_pol_asu"/>
</dbReference>
<dbReference type="InterPro" id="IPR006592">
    <property type="entry name" value="RNA_pol_N"/>
</dbReference>
<dbReference type="InterPro" id="IPR007080">
    <property type="entry name" value="RNA_pol_Rpb1_1"/>
</dbReference>
<dbReference type="InterPro" id="IPR007066">
    <property type="entry name" value="RNA_pol_Rpb1_3"/>
</dbReference>
<dbReference type="InterPro" id="IPR042102">
    <property type="entry name" value="RNA_pol_Rpb1_3_sf"/>
</dbReference>
<dbReference type="InterPro" id="IPR007083">
    <property type="entry name" value="RNA_pol_Rpb1_4"/>
</dbReference>
<dbReference type="InterPro" id="IPR007081">
    <property type="entry name" value="RNA_pol_Rpb1_5"/>
</dbReference>
<dbReference type="InterPro" id="IPR044893">
    <property type="entry name" value="RNA_pol_Rpb1_clamp_domain"/>
</dbReference>
<dbReference type="InterPro" id="IPR038120">
    <property type="entry name" value="Rpb1_funnel_sf"/>
</dbReference>
<dbReference type="NCBIfam" id="TIGR02386">
    <property type="entry name" value="rpoC_TIGR"/>
    <property type="match status" value="1"/>
</dbReference>
<dbReference type="PANTHER" id="PTHR19376">
    <property type="entry name" value="DNA-DIRECTED RNA POLYMERASE"/>
    <property type="match status" value="1"/>
</dbReference>
<dbReference type="PANTHER" id="PTHR19376:SF54">
    <property type="entry name" value="DNA-DIRECTED RNA POLYMERASE SUBUNIT BETA"/>
    <property type="match status" value="1"/>
</dbReference>
<dbReference type="Pfam" id="PF04997">
    <property type="entry name" value="RNA_pol_Rpb1_1"/>
    <property type="match status" value="1"/>
</dbReference>
<dbReference type="Pfam" id="PF00623">
    <property type="entry name" value="RNA_pol_Rpb1_2"/>
    <property type="match status" value="2"/>
</dbReference>
<dbReference type="Pfam" id="PF04983">
    <property type="entry name" value="RNA_pol_Rpb1_3"/>
    <property type="match status" value="1"/>
</dbReference>
<dbReference type="Pfam" id="PF05000">
    <property type="entry name" value="RNA_pol_Rpb1_4"/>
    <property type="match status" value="1"/>
</dbReference>
<dbReference type="Pfam" id="PF04998">
    <property type="entry name" value="RNA_pol_Rpb1_5"/>
    <property type="match status" value="1"/>
</dbReference>
<dbReference type="SMART" id="SM00663">
    <property type="entry name" value="RPOLA_N"/>
    <property type="match status" value="1"/>
</dbReference>
<dbReference type="SUPFAM" id="SSF64484">
    <property type="entry name" value="beta and beta-prime subunits of DNA dependent RNA-polymerase"/>
    <property type="match status" value="1"/>
</dbReference>
<evidence type="ECO:0000255" key="1">
    <source>
        <dbReference type="HAMAP-Rule" id="MF_01322"/>
    </source>
</evidence>
<name>RPOC_XANCB</name>
<protein>
    <recommendedName>
        <fullName evidence="1">DNA-directed RNA polymerase subunit beta'</fullName>
        <shortName evidence="1">RNAP subunit beta'</shortName>
        <ecNumber evidence="1">2.7.7.6</ecNumber>
    </recommendedName>
    <alternativeName>
        <fullName evidence="1">RNA polymerase subunit beta'</fullName>
    </alternativeName>
    <alternativeName>
        <fullName evidence="1">Transcriptase subunit beta'</fullName>
    </alternativeName>
</protein>
<organism>
    <name type="scientific">Xanthomonas campestris pv. campestris (strain B100)</name>
    <dbReference type="NCBI Taxonomy" id="509169"/>
    <lineage>
        <taxon>Bacteria</taxon>
        <taxon>Pseudomonadati</taxon>
        <taxon>Pseudomonadota</taxon>
        <taxon>Gammaproteobacteria</taxon>
        <taxon>Lysobacterales</taxon>
        <taxon>Lysobacteraceae</taxon>
        <taxon>Xanthomonas</taxon>
    </lineage>
</organism>
<sequence length="1405" mass="155182">MKDLLNLFNQQRQTLDFDAIKIALASPDLIRSWSYGEVKKPETINYRTFKPERDGLFCAAIFGPIKDYECLCGKYKRMKHRGVVCEKCGTEVTLAKVRRERMGHIDLASPVAHIWFLKSLPSRIGLMLDMTLRDIERVLYFEAYVVTEPGLTPLERRQLLTEEQYLTARQEYNDDFDAAMGAEAVYELLRTIDLQSEMTRLREEIASTGSETKLKRLTKRIKLIEAFLESGNRPEWMVMTVLPVLPPDLRPLVPLDGGRFATSDLNDLYRRVINRNNRLRRLLELNAPDIIVRNEKRMLQESVDALLDNGRRGRAITGTNKRPLKSLADMIKGKQGRFRQNLLGKRVDYSGRSVITVGPYLKLHQCGLPKKMALELFKPFVFAKLQRRGLATTIKAAKKLVEREEAEVWDILEEVIREHPVLLNRAPTLHRLGIQAFEPVLIEGKAIQLHPLVCTAFNADFDGDQMAVHVPLSLEAQLEARALMMSTNNILSPANGEPIIVPSQDVVLGLYYMSRALENKKGEGMVFANTSEVKRAYDNRVVELHAKVKVRITQVDVDTVDGKRTSGTSIVDTTVGRALLSEILPEGLPFQLANTEMTKKNISRLINSSYRLLGLKDTVVFADKLMYTGYAYATRAGVSIGIDDMLIPDEKKGILTEAEAEVLEIQEQYQSGLVTAGERYNKVVDIWSRTSGRIAKAMMDTIGTEKVENAKGETIDQKSMNSLYIMADSGARGSQAQIRQLAGMRGLMARPDGSIIETPIKANFREGLNVQEYFNSTHGARKGLADTALKTANSGYLTRRLVDVAQDVVITEVDCGTTEGLIMTPIVEGGDVVEPLKERVLGRVVAEDVYLPGNDEEPIVTRNTLLDEAWVAKLEDASVQSVKVRSTISCESSFGVCARCYGRDLARGHQVNIGEAVGVIAAQSIGEPGTQLTMRTFHIGGAASRAAAVDNITVKTTGSVKFNNLKSVAHASGALVAVSRSGELSVLDGHGRERERYKLPYGATITAKDGDAVKAGQAVANWDPHNHPIVSEVAGFIRFIDFVDGVTVIEKTDELTGLASREITDPKRRGAQAKELRPIVRIVDAKGNDLTIPNTDLPAQYLLPPRSIVNLQDGAAVGVGDVVAKIPQEASKTRDITGGLPRVADLFEARKPKDPAILAERSGIISFGKDTKGKQRLIIKDTDGSEHEELIPKYRQIIVFEGEHVTKGETVVDGEPSPQDILRLLGVEPLAAYLVKEIQDVYRLQGVKINDKHIEVITRQMLRKVEITDQGNSKFLNGEQVERQRVIEENARLVTRNELPAKYDPVLLGITKASLATESFISAASFQETTRVLTEAAVRGTRDNLRGLKENVIVGRLIPAGTGLAYHAGRRKASGLTDSEMETLSGKPAVAEPVATVADAGADEE</sequence>
<accession>B0RU88</accession>
<proteinExistence type="inferred from homology"/>
<comment type="function">
    <text evidence="1">DNA-dependent RNA polymerase catalyzes the transcription of DNA into RNA using the four ribonucleoside triphosphates as substrates.</text>
</comment>
<comment type="catalytic activity">
    <reaction evidence="1">
        <text>RNA(n) + a ribonucleoside 5'-triphosphate = RNA(n+1) + diphosphate</text>
        <dbReference type="Rhea" id="RHEA:21248"/>
        <dbReference type="Rhea" id="RHEA-COMP:14527"/>
        <dbReference type="Rhea" id="RHEA-COMP:17342"/>
        <dbReference type="ChEBI" id="CHEBI:33019"/>
        <dbReference type="ChEBI" id="CHEBI:61557"/>
        <dbReference type="ChEBI" id="CHEBI:140395"/>
        <dbReference type="EC" id="2.7.7.6"/>
    </reaction>
</comment>
<comment type="cofactor">
    <cofactor evidence="1">
        <name>Mg(2+)</name>
        <dbReference type="ChEBI" id="CHEBI:18420"/>
    </cofactor>
    <text evidence="1">Binds 1 Mg(2+) ion per subunit.</text>
</comment>
<comment type="cofactor">
    <cofactor evidence="1">
        <name>Zn(2+)</name>
        <dbReference type="ChEBI" id="CHEBI:29105"/>
    </cofactor>
    <text evidence="1">Binds 2 Zn(2+) ions per subunit.</text>
</comment>
<comment type="subunit">
    <text evidence="1">The RNAP catalytic core consists of 2 alpha, 1 beta, 1 beta' and 1 omega subunit. When a sigma factor is associated with the core the holoenzyme is formed, which can initiate transcription.</text>
</comment>
<comment type="similarity">
    <text evidence="1">Belongs to the RNA polymerase beta' chain family.</text>
</comment>
<keyword id="KW-0240">DNA-directed RNA polymerase</keyword>
<keyword id="KW-0460">Magnesium</keyword>
<keyword id="KW-0479">Metal-binding</keyword>
<keyword id="KW-0548">Nucleotidyltransferase</keyword>
<keyword id="KW-0804">Transcription</keyword>
<keyword id="KW-0808">Transferase</keyword>
<keyword id="KW-0862">Zinc</keyword>
<reference key="1">
    <citation type="journal article" date="2008" name="J. Biotechnol.">
        <title>The genome of Xanthomonas campestris pv. campestris B100 and its use for the reconstruction of metabolic pathways involved in xanthan biosynthesis.</title>
        <authorList>
            <person name="Vorhoelter F.-J."/>
            <person name="Schneiker S."/>
            <person name="Goesmann A."/>
            <person name="Krause L."/>
            <person name="Bekel T."/>
            <person name="Kaiser O."/>
            <person name="Linke B."/>
            <person name="Patschkowski T."/>
            <person name="Rueckert C."/>
            <person name="Schmid J."/>
            <person name="Sidhu V.K."/>
            <person name="Sieber V."/>
            <person name="Tauch A."/>
            <person name="Watt S.A."/>
            <person name="Weisshaar B."/>
            <person name="Becker A."/>
            <person name="Niehaus K."/>
            <person name="Puehler A."/>
        </authorList>
    </citation>
    <scope>NUCLEOTIDE SEQUENCE [LARGE SCALE GENOMIC DNA]</scope>
    <source>
        <strain>B100</strain>
    </source>
</reference>
<gene>
    <name evidence="1" type="primary">rpoC</name>
    <name type="ordered locus">xcc-b100_3465</name>
</gene>
<feature type="chain" id="PRO_0000353458" description="DNA-directed RNA polymerase subunit beta'">
    <location>
        <begin position="1"/>
        <end position="1405"/>
    </location>
</feature>
<feature type="binding site" evidence="1">
    <location>
        <position position="70"/>
    </location>
    <ligand>
        <name>Zn(2+)</name>
        <dbReference type="ChEBI" id="CHEBI:29105"/>
        <label>1</label>
    </ligand>
</feature>
<feature type="binding site" evidence="1">
    <location>
        <position position="72"/>
    </location>
    <ligand>
        <name>Zn(2+)</name>
        <dbReference type="ChEBI" id="CHEBI:29105"/>
        <label>1</label>
    </ligand>
</feature>
<feature type="binding site" evidence="1">
    <location>
        <position position="85"/>
    </location>
    <ligand>
        <name>Zn(2+)</name>
        <dbReference type="ChEBI" id="CHEBI:29105"/>
        <label>1</label>
    </ligand>
</feature>
<feature type="binding site" evidence="1">
    <location>
        <position position="88"/>
    </location>
    <ligand>
        <name>Zn(2+)</name>
        <dbReference type="ChEBI" id="CHEBI:29105"/>
        <label>1</label>
    </ligand>
</feature>
<feature type="binding site" evidence="1">
    <location>
        <position position="460"/>
    </location>
    <ligand>
        <name>Mg(2+)</name>
        <dbReference type="ChEBI" id="CHEBI:18420"/>
    </ligand>
</feature>
<feature type="binding site" evidence="1">
    <location>
        <position position="462"/>
    </location>
    <ligand>
        <name>Mg(2+)</name>
        <dbReference type="ChEBI" id="CHEBI:18420"/>
    </ligand>
</feature>
<feature type="binding site" evidence="1">
    <location>
        <position position="464"/>
    </location>
    <ligand>
        <name>Mg(2+)</name>
        <dbReference type="ChEBI" id="CHEBI:18420"/>
    </ligand>
</feature>
<feature type="binding site" evidence="1">
    <location>
        <position position="815"/>
    </location>
    <ligand>
        <name>Zn(2+)</name>
        <dbReference type="ChEBI" id="CHEBI:29105"/>
        <label>2</label>
    </ligand>
</feature>
<feature type="binding site" evidence="1">
    <location>
        <position position="890"/>
    </location>
    <ligand>
        <name>Zn(2+)</name>
        <dbReference type="ChEBI" id="CHEBI:29105"/>
        <label>2</label>
    </ligand>
</feature>
<feature type="binding site" evidence="1">
    <location>
        <position position="897"/>
    </location>
    <ligand>
        <name>Zn(2+)</name>
        <dbReference type="ChEBI" id="CHEBI:29105"/>
        <label>2</label>
    </ligand>
</feature>
<feature type="binding site" evidence="1">
    <location>
        <position position="900"/>
    </location>
    <ligand>
        <name>Zn(2+)</name>
        <dbReference type="ChEBI" id="CHEBI:29105"/>
        <label>2</label>
    </ligand>
</feature>